<accession>P52761</accession>
<proteinExistence type="inferred from homology"/>
<protein>
    <recommendedName>
        <fullName>RutC family protein slr0709</fullName>
    </recommendedName>
</protein>
<reference key="1">
    <citation type="journal article" date="1995" name="Plant Mol. Biol.">
        <title>The NADP-glutamate dehydrogenase of the cyanobacterium Synechocystis 6803: cloning, transcriptional analysis and disruption of the gdhA gene.</title>
        <authorList>
            <person name="Chavez S."/>
            <person name="Reyes J.C."/>
            <person name="Chauvat F."/>
            <person name="Florencio F.J."/>
            <person name="Candau P."/>
        </authorList>
    </citation>
    <scope>NUCLEOTIDE SEQUENCE [GENOMIC DNA]</scope>
</reference>
<reference key="2">
    <citation type="journal article" date="1995" name="DNA Res.">
        <title>Sequence analysis of the genome of the unicellular cyanobacterium Synechocystis sp. strain PCC6803. I. Sequence features in the 1 Mb region from map positions 64% to 92% of the genome.</title>
        <authorList>
            <person name="Kaneko T."/>
            <person name="Tanaka A."/>
            <person name="Sato S."/>
            <person name="Kotani H."/>
            <person name="Sazuka T."/>
            <person name="Miyajima N."/>
            <person name="Sugiura M."/>
            <person name="Tabata S."/>
        </authorList>
    </citation>
    <scope>NUCLEOTIDE SEQUENCE [LARGE SCALE GENOMIC DNA]</scope>
    <source>
        <strain>ATCC 27184 / PCC 6803 / N-1</strain>
    </source>
</reference>
<reference key="3">
    <citation type="journal article" date="1996" name="DNA Res.">
        <title>Sequence analysis of the genome of the unicellular cyanobacterium Synechocystis sp. strain PCC6803. II. Sequence determination of the entire genome and assignment of potential protein-coding regions.</title>
        <authorList>
            <person name="Kaneko T."/>
            <person name="Sato S."/>
            <person name="Kotani H."/>
            <person name="Tanaka A."/>
            <person name="Asamizu E."/>
            <person name="Nakamura Y."/>
            <person name="Miyajima N."/>
            <person name="Hirosawa M."/>
            <person name="Sugiura M."/>
            <person name="Sasamoto S."/>
            <person name="Kimura T."/>
            <person name="Hosouchi T."/>
            <person name="Matsuno A."/>
            <person name="Muraki A."/>
            <person name="Nakazaki N."/>
            <person name="Naruo K."/>
            <person name="Okumura S."/>
            <person name="Shimpo S."/>
            <person name="Takeuchi C."/>
            <person name="Wada T."/>
            <person name="Watanabe A."/>
            <person name="Yamada M."/>
            <person name="Yasuda M."/>
            <person name="Tabata S."/>
        </authorList>
    </citation>
    <scope>NUCLEOTIDE SEQUENCE [LARGE SCALE GENOMIC DNA]</scope>
    <source>
        <strain>ATCC 27184 / PCC 6803 / Kazusa</strain>
    </source>
</reference>
<organism>
    <name type="scientific">Synechocystis sp. (strain ATCC 27184 / PCC 6803 / Kazusa)</name>
    <dbReference type="NCBI Taxonomy" id="1111708"/>
    <lineage>
        <taxon>Bacteria</taxon>
        <taxon>Bacillati</taxon>
        <taxon>Cyanobacteriota</taxon>
        <taxon>Cyanophyceae</taxon>
        <taxon>Synechococcales</taxon>
        <taxon>Merismopediaceae</taxon>
        <taxon>Synechocystis</taxon>
    </lineage>
</organism>
<comment type="similarity">
    <text evidence="1">Belongs to the RutC family.</text>
</comment>
<feature type="chain" id="PRO_0000170339" description="RutC family protein slr0709">
    <location>
        <begin position="1"/>
        <end position="130"/>
    </location>
</feature>
<keyword id="KW-1185">Reference proteome</keyword>
<gene>
    <name type="ordered locus">slr0709</name>
</gene>
<sequence>MTMKIIQTAQAPAPVGPYNQAIAANGFLFTAGQIALDPQTMTIMGEGNVEVQAKQVLTNLGAVLQEAGCGWENVVKTTVFLKDMNDFAAVNAIYGQYFDEATAPARSCVEVARLPKDVLVEIDCVAVLPT</sequence>
<evidence type="ECO:0000305" key="1"/>
<dbReference type="EMBL" id="X77454">
    <property type="protein sequence ID" value="CAA54600.1"/>
    <property type="molecule type" value="Genomic_DNA"/>
</dbReference>
<dbReference type="EMBL" id="BA000022">
    <property type="protein sequence ID" value="BAA10755.1"/>
    <property type="molecule type" value="Genomic_DNA"/>
</dbReference>
<dbReference type="PIR" id="S56682">
    <property type="entry name" value="S56682"/>
</dbReference>
<dbReference type="SMR" id="P52761"/>
<dbReference type="FunCoup" id="P52761">
    <property type="interactions" value="404"/>
</dbReference>
<dbReference type="STRING" id="1148.gene:10500259"/>
<dbReference type="PaxDb" id="1148-1006602"/>
<dbReference type="EnsemblBacteria" id="BAA10755">
    <property type="protein sequence ID" value="BAA10755"/>
    <property type="gene ID" value="BAA10755"/>
</dbReference>
<dbReference type="KEGG" id="syn:slr0709"/>
<dbReference type="eggNOG" id="COG0251">
    <property type="taxonomic scope" value="Bacteria"/>
</dbReference>
<dbReference type="InParanoid" id="P52761"/>
<dbReference type="PhylomeDB" id="P52761"/>
<dbReference type="Proteomes" id="UP000001425">
    <property type="component" value="Chromosome"/>
</dbReference>
<dbReference type="GO" id="GO:0005829">
    <property type="term" value="C:cytosol"/>
    <property type="evidence" value="ECO:0000318"/>
    <property type="project" value="GO_Central"/>
</dbReference>
<dbReference type="GO" id="GO:0019239">
    <property type="term" value="F:deaminase activity"/>
    <property type="evidence" value="ECO:0000318"/>
    <property type="project" value="GO_Central"/>
</dbReference>
<dbReference type="CDD" id="cd00448">
    <property type="entry name" value="YjgF_YER057c_UK114_family"/>
    <property type="match status" value="1"/>
</dbReference>
<dbReference type="FunFam" id="3.30.1330.40:FF:000001">
    <property type="entry name" value="L-PSP family endoribonuclease"/>
    <property type="match status" value="1"/>
</dbReference>
<dbReference type="Gene3D" id="3.30.1330.40">
    <property type="entry name" value="RutC-like"/>
    <property type="match status" value="1"/>
</dbReference>
<dbReference type="InterPro" id="IPR006056">
    <property type="entry name" value="RidA"/>
</dbReference>
<dbReference type="InterPro" id="IPR019897">
    <property type="entry name" value="RidA_CS"/>
</dbReference>
<dbReference type="InterPro" id="IPR035959">
    <property type="entry name" value="RutC-like_sf"/>
</dbReference>
<dbReference type="InterPro" id="IPR006175">
    <property type="entry name" value="YjgF/YER057c/UK114"/>
</dbReference>
<dbReference type="NCBIfam" id="TIGR00004">
    <property type="entry name" value="Rid family detoxifying hydrolase"/>
    <property type="match status" value="1"/>
</dbReference>
<dbReference type="PANTHER" id="PTHR11803">
    <property type="entry name" value="2-IMINOBUTANOATE/2-IMINOPROPANOATE DEAMINASE RIDA"/>
    <property type="match status" value="1"/>
</dbReference>
<dbReference type="PANTHER" id="PTHR11803:SF58">
    <property type="entry name" value="PROTEIN HMF1-RELATED"/>
    <property type="match status" value="1"/>
</dbReference>
<dbReference type="Pfam" id="PF01042">
    <property type="entry name" value="Ribonuc_L-PSP"/>
    <property type="match status" value="1"/>
</dbReference>
<dbReference type="SUPFAM" id="SSF55298">
    <property type="entry name" value="YjgF-like"/>
    <property type="match status" value="1"/>
</dbReference>
<dbReference type="PROSITE" id="PS01094">
    <property type="entry name" value="UPF0076"/>
    <property type="match status" value="1"/>
</dbReference>
<name>Y709_SYNY3</name>